<gene>
    <name evidence="1" type="primary">htpG</name>
    <name type="ordered locus">Ecok1_04350</name>
    <name type="ORF">APECO1_1542</name>
</gene>
<organism>
    <name type="scientific">Escherichia coli O1:K1 / APEC</name>
    <dbReference type="NCBI Taxonomy" id="405955"/>
    <lineage>
        <taxon>Bacteria</taxon>
        <taxon>Pseudomonadati</taxon>
        <taxon>Pseudomonadota</taxon>
        <taxon>Gammaproteobacteria</taxon>
        <taxon>Enterobacterales</taxon>
        <taxon>Enterobacteriaceae</taxon>
        <taxon>Escherichia</taxon>
    </lineage>
</organism>
<dbReference type="EMBL" id="CP000468">
    <property type="protein sequence ID" value="ABI99928.1"/>
    <property type="molecule type" value="Genomic_DNA"/>
</dbReference>
<dbReference type="RefSeq" id="WP_000678211.1">
    <property type="nucleotide sequence ID" value="NZ_CADILS010000009.1"/>
</dbReference>
<dbReference type="SMR" id="A1A8D9"/>
<dbReference type="KEGG" id="ecv:APECO1_1542"/>
<dbReference type="HOGENOM" id="CLU_006684_3_0_6"/>
<dbReference type="Proteomes" id="UP000008216">
    <property type="component" value="Chromosome"/>
</dbReference>
<dbReference type="GO" id="GO:0005737">
    <property type="term" value="C:cytoplasm"/>
    <property type="evidence" value="ECO:0007669"/>
    <property type="project" value="UniProtKB-SubCell"/>
</dbReference>
<dbReference type="GO" id="GO:0005524">
    <property type="term" value="F:ATP binding"/>
    <property type="evidence" value="ECO:0007669"/>
    <property type="project" value="UniProtKB-UniRule"/>
</dbReference>
<dbReference type="GO" id="GO:0016887">
    <property type="term" value="F:ATP hydrolysis activity"/>
    <property type="evidence" value="ECO:0007669"/>
    <property type="project" value="InterPro"/>
</dbReference>
<dbReference type="GO" id="GO:0140662">
    <property type="term" value="F:ATP-dependent protein folding chaperone"/>
    <property type="evidence" value="ECO:0007669"/>
    <property type="project" value="InterPro"/>
</dbReference>
<dbReference type="GO" id="GO:0051082">
    <property type="term" value="F:unfolded protein binding"/>
    <property type="evidence" value="ECO:0007669"/>
    <property type="project" value="UniProtKB-UniRule"/>
</dbReference>
<dbReference type="CDD" id="cd16927">
    <property type="entry name" value="HATPase_Hsp90-like"/>
    <property type="match status" value="1"/>
</dbReference>
<dbReference type="FunFam" id="1.20.120.790:FF:000002">
    <property type="entry name" value="Molecular chaperone HtpG"/>
    <property type="match status" value="1"/>
</dbReference>
<dbReference type="FunFam" id="3.30.230.80:FF:000002">
    <property type="entry name" value="Molecular chaperone HtpG"/>
    <property type="match status" value="1"/>
</dbReference>
<dbReference type="FunFam" id="3.30.565.10:FF:000009">
    <property type="entry name" value="Molecular chaperone HtpG"/>
    <property type="match status" value="1"/>
</dbReference>
<dbReference type="FunFam" id="3.40.50.11260:FF:000002">
    <property type="entry name" value="Molecular chaperone HtpG"/>
    <property type="match status" value="1"/>
</dbReference>
<dbReference type="Gene3D" id="3.30.230.80">
    <property type="match status" value="1"/>
</dbReference>
<dbReference type="Gene3D" id="3.40.50.11260">
    <property type="match status" value="1"/>
</dbReference>
<dbReference type="Gene3D" id="1.20.120.790">
    <property type="entry name" value="Heat shock protein 90, C-terminal domain"/>
    <property type="match status" value="1"/>
</dbReference>
<dbReference type="Gene3D" id="3.30.565.10">
    <property type="entry name" value="Histidine kinase-like ATPase, C-terminal domain"/>
    <property type="match status" value="1"/>
</dbReference>
<dbReference type="HAMAP" id="MF_00505">
    <property type="entry name" value="HSP90"/>
    <property type="match status" value="1"/>
</dbReference>
<dbReference type="InterPro" id="IPR036890">
    <property type="entry name" value="HATPase_C_sf"/>
</dbReference>
<dbReference type="InterPro" id="IPR019805">
    <property type="entry name" value="Heat_shock_protein_90_CS"/>
</dbReference>
<dbReference type="InterPro" id="IPR037196">
    <property type="entry name" value="HSP90_C"/>
</dbReference>
<dbReference type="InterPro" id="IPR001404">
    <property type="entry name" value="Hsp90_fam"/>
</dbReference>
<dbReference type="InterPro" id="IPR020575">
    <property type="entry name" value="Hsp90_N"/>
</dbReference>
<dbReference type="InterPro" id="IPR020568">
    <property type="entry name" value="Ribosomal_Su5_D2-typ_SF"/>
</dbReference>
<dbReference type="NCBIfam" id="NF003555">
    <property type="entry name" value="PRK05218.1"/>
    <property type="match status" value="1"/>
</dbReference>
<dbReference type="PANTHER" id="PTHR11528">
    <property type="entry name" value="HEAT SHOCK PROTEIN 90 FAMILY MEMBER"/>
    <property type="match status" value="1"/>
</dbReference>
<dbReference type="Pfam" id="PF13589">
    <property type="entry name" value="HATPase_c_3"/>
    <property type="match status" value="1"/>
</dbReference>
<dbReference type="Pfam" id="PF00183">
    <property type="entry name" value="HSP90"/>
    <property type="match status" value="1"/>
</dbReference>
<dbReference type="PIRSF" id="PIRSF002583">
    <property type="entry name" value="Hsp90"/>
    <property type="match status" value="1"/>
</dbReference>
<dbReference type="PRINTS" id="PR00775">
    <property type="entry name" value="HEATSHOCK90"/>
</dbReference>
<dbReference type="SMART" id="SM00387">
    <property type="entry name" value="HATPase_c"/>
    <property type="match status" value="1"/>
</dbReference>
<dbReference type="SUPFAM" id="SSF55874">
    <property type="entry name" value="ATPase domain of HSP90 chaperone/DNA topoisomerase II/histidine kinase"/>
    <property type="match status" value="1"/>
</dbReference>
<dbReference type="SUPFAM" id="SSF110942">
    <property type="entry name" value="HSP90 C-terminal domain"/>
    <property type="match status" value="1"/>
</dbReference>
<dbReference type="SUPFAM" id="SSF54211">
    <property type="entry name" value="Ribosomal protein S5 domain 2-like"/>
    <property type="match status" value="1"/>
</dbReference>
<dbReference type="PROSITE" id="PS00298">
    <property type="entry name" value="HSP90"/>
    <property type="match status" value="1"/>
</dbReference>
<evidence type="ECO:0000255" key="1">
    <source>
        <dbReference type="HAMAP-Rule" id="MF_00505"/>
    </source>
</evidence>
<keyword id="KW-0067">ATP-binding</keyword>
<keyword id="KW-0143">Chaperone</keyword>
<keyword id="KW-0963">Cytoplasm</keyword>
<keyword id="KW-0547">Nucleotide-binding</keyword>
<keyword id="KW-1185">Reference proteome</keyword>
<keyword id="KW-0346">Stress response</keyword>
<accession>A1A8D9</accession>
<comment type="function">
    <text evidence="1">Molecular chaperone. Has ATPase activity.</text>
</comment>
<comment type="subunit">
    <text evidence="1">Homodimer.</text>
</comment>
<comment type="subcellular location">
    <subcellularLocation>
        <location evidence="1">Cytoplasm</location>
    </subcellularLocation>
</comment>
<comment type="similarity">
    <text evidence="1">Belongs to the heat shock protein 90 family.</text>
</comment>
<sequence length="624" mass="71437">MKGQETRGFQSEVKQLLHLMIHSLYSNKEIFLRELISNASDAADKLRFRALSNPDLYEGDGELRVRVSFDKDKRTLTISDNGVGMTRDEVIDHLGTIAKSGTKSFLESLGSDQAKDSQLIGQFGVGFYSAFIVADKVTVRTRAAGEKPENGVFWESAGEGEYTVADITKEDRGTEITLHLREGEDEFLDDWRVRSIISKYSDHIALPVEIEKREEKDGETVISWEKINKAQALWTRNKSEITDEEYKEFYKHIAHDFNEPLTWSHNRVEGKQEYTSLLYIPSQAPWDMWNRDHKHGLKLYVQRVFIMDDAEQFMPNYLRFVRGLIDSSDLPLNVSREILQDSTVTRNLRNALTKRVLQMLEKLAKDDAEKYQTFWQQFGLVLKEGPAEDFANQEAIAKLLRFASTHTDSSAQTVSLEDYVSRMKEGQEKIYYITADSYAAAKSSPHLELLRKKGIEVLLLSDRIDEWMMNYLTEFDGKPFQSVSKVDESLEKLADEVDESAKEAEKALTPFIDRVKALLGERVKDVRLTHRLTDTPAIVSTDADEMSTQMAKLFAAAGQKVPEVKYIFELNPDHVLVKRAADTEDEAKFSEWVELLLDQALLAERGTLEDPNLFIRRMNQLLVS</sequence>
<feature type="chain" id="PRO_1000014914" description="Chaperone protein HtpG">
    <location>
        <begin position="1"/>
        <end position="624"/>
    </location>
</feature>
<feature type="region of interest" description="A; substrate-binding" evidence="1">
    <location>
        <begin position="1"/>
        <end position="336"/>
    </location>
</feature>
<feature type="region of interest" description="B" evidence="1">
    <location>
        <begin position="337"/>
        <end position="552"/>
    </location>
</feature>
<feature type="region of interest" description="C" evidence="1">
    <location>
        <begin position="553"/>
        <end position="624"/>
    </location>
</feature>
<name>HTPG_ECOK1</name>
<reference key="1">
    <citation type="journal article" date="2007" name="J. Bacteriol.">
        <title>The genome sequence of avian pathogenic Escherichia coli strain O1:K1:H7 shares strong similarities with human extraintestinal pathogenic E. coli genomes.</title>
        <authorList>
            <person name="Johnson T.J."/>
            <person name="Kariyawasam S."/>
            <person name="Wannemuehler Y."/>
            <person name="Mangiamele P."/>
            <person name="Johnson S.J."/>
            <person name="Doetkott C."/>
            <person name="Skyberg J.A."/>
            <person name="Lynne A.M."/>
            <person name="Johnson J.R."/>
            <person name="Nolan L.K."/>
        </authorList>
    </citation>
    <scope>NUCLEOTIDE SEQUENCE [LARGE SCALE GENOMIC DNA]</scope>
</reference>
<protein>
    <recommendedName>
        <fullName evidence="1">Chaperone protein HtpG</fullName>
    </recommendedName>
    <alternativeName>
        <fullName evidence="1">Heat shock protein HtpG</fullName>
    </alternativeName>
    <alternativeName>
        <fullName evidence="1">High temperature protein G</fullName>
    </alternativeName>
</protein>
<proteinExistence type="inferred from homology"/>